<feature type="chain" id="PRO_0000363310" description="Putative protein phosphatase 2C 63">
    <location>
        <begin position="1"/>
        <end position="223"/>
    </location>
</feature>
<feature type="domain" description="PPM-type phosphatase" evidence="1">
    <location>
        <begin position="1"/>
        <end position="212"/>
    </location>
</feature>
<feature type="region of interest" description="Disordered" evidence="2">
    <location>
        <begin position="1"/>
        <end position="22"/>
    </location>
</feature>
<accession>Q0D629</accession>
<comment type="catalytic activity">
    <reaction>
        <text>O-phospho-L-seryl-[protein] + H2O = L-seryl-[protein] + phosphate</text>
        <dbReference type="Rhea" id="RHEA:20629"/>
        <dbReference type="Rhea" id="RHEA-COMP:9863"/>
        <dbReference type="Rhea" id="RHEA-COMP:11604"/>
        <dbReference type="ChEBI" id="CHEBI:15377"/>
        <dbReference type="ChEBI" id="CHEBI:29999"/>
        <dbReference type="ChEBI" id="CHEBI:43474"/>
        <dbReference type="ChEBI" id="CHEBI:83421"/>
        <dbReference type="EC" id="3.1.3.16"/>
    </reaction>
</comment>
<comment type="catalytic activity">
    <reaction>
        <text>O-phospho-L-threonyl-[protein] + H2O = L-threonyl-[protein] + phosphate</text>
        <dbReference type="Rhea" id="RHEA:47004"/>
        <dbReference type="Rhea" id="RHEA-COMP:11060"/>
        <dbReference type="Rhea" id="RHEA-COMP:11605"/>
        <dbReference type="ChEBI" id="CHEBI:15377"/>
        <dbReference type="ChEBI" id="CHEBI:30013"/>
        <dbReference type="ChEBI" id="CHEBI:43474"/>
        <dbReference type="ChEBI" id="CHEBI:61977"/>
        <dbReference type="EC" id="3.1.3.16"/>
    </reaction>
</comment>
<comment type="similarity">
    <text evidence="3">Belongs to the PP2C family.</text>
</comment>
<comment type="caution">
    <text evidence="3">Although related to the protein phosphatase 2C family, lacks the conserved residues that bind manganese, suggesting it has no phosphatase activity.</text>
</comment>
<comment type="caution">
    <text evidence="3">Could be the product of a pseudogene.</text>
</comment>
<gene>
    <name type="ordered locus">Os07g0516100</name>
    <name type="ordered locus">LOC_Os07g33230</name>
</gene>
<protein>
    <recommendedName>
        <fullName>Putative protein phosphatase 2C 63</fullName>
        <shortName>OsPP2C63</shortName>
        <ecNumber>3.1.3.16</ecNumber>
    </recommendedName>
</protein>
<sequence length="223" mass="24680">MASSQQAVRETGRGRASSSSAGGRKVTFGYHLVEGKTPHGMEDLHVAEFRRLDDGNEDGGDGGSTAVTAILINGETLAVANVGDSRAVAFDVRAGRAQQLSVDHEPLRERDAIEHCGGFVTEIHGDVPRVDAQLATSRAFGDRQIKEHISSDPNVTIEDVGGRRRRWWHGARRPRQRRGVEECFLQRLAEYAICIHGASMEHRNFHVHSSHVHYFEIPPFKEV</sequence>
<dbReference type="EC" id="3.1.3.16"/>
<dbReference type="EMBL" id="AP004269">
    <property type="status" value="NOT_ANNOTATED_CDS"/>
    <property type="molecule type" value="Genomic_DNA"/>
</dbReference>
<dbReference type="EMBL" id="AP014963">
    <property type="status" value="NOT_ANNOTATED_CDS"/>
    <property type="molecule type" value="Genomic_DNA"/>
</dbReference>
<dbReference type="SMR" id="Q0D629"/>
<dbReference type="STRING" id="39947.Q0D629"/>
<dbReference type="PaxDb" id="39947-Q0D629"/>
<dbReference type="eggNOG" id="KOG0698">
    <property type="taxonomic scope" value="Eukaryota"/>
</dbReference>
<dbReference type="InParanoid" id="Q0D629"/>
<dbReference type="Proteomes" id="UP000000763">
    <property type="component" value="Chromosome 7"/>
</dbReference>
<dbReference type="Proteomes" id="UP000059680">
    <property type="component" value="Chromosome 7"/>
</dbReference>
<dbReference type="GO" id="GO:0004722">
    <property type="term" value="F:protein serine/threonine phosphatase activity"/>
    <property type="evidence" value="ECO:0000318"/>
    <property type="project" value="GO_Central"/>
</dbReference>
<dbReference type="GO" id="GO:1902531">
    <property type="term" value="P:regulation of intracellular signal transduction"/>
    <property type="evidence" value="ECO:0000318"/>
    <property type="project" value="GO_Central"/>
</dbReference>
<dbReference type="CDD" id="cd00143">
    <property type="entry name" value="PP2Cc"/>
    <property type="match status" value="1"/>
</dbReference>
<dbReference type="FunFam" id="3.60.40.10:FF:000210">
    <property type="entry name" value="Putative protein phosphatase 2C 63"/>
    <property type="match status" value="1"/>
</dbReference>
<dbReference type="Gene3D" id="3.60.40.10">
    <property type="entry name" value="PPM-type phosphatase domain"/>
    <property type="match status" value="1"/>
</dbReference>
<dbReference type="InterPro" id="IPR015655">
    <property type="entry name" value="PP2C"/>
</dbReference>
<dbReference type="InterPro" id="IPR036457">
    <property type="entry name" value="PPM-type-like_dom_sf"/>
</dbReference>
<dbReference type="InterPro" id="IPR001932">
    <property type="entry name" value="PPM-type_phosphatase-like_dom"/>
</dbReference>
<dbReference type="PANTHER" id="PTHR47992">
    <property type="entry name" value="PROTEIN PHOSPHATASE"/>
    <property type="match status" value="1"/>
</dbReference>
<dbReference type="Pfam" id="PF00481">
    <property type="entry name" value="PP2C"/>
    <property type="match status" value="1"/>
</dbReference>
<dbReference type="SUPFAM" id="SSF81606">
    <property type="entry name" value="PP2C-like"/>
    <property type="match status" value="1"/>
</dbReference>
<dbReference type="PROSITE" id="PS51746">
    <property type="entry name" value="PPM_2"/>
    <property type="match status" value="1"/>
</dbReference>
<keyword id="KW-0378">Hydrolase</keyword>
<keyword id="KW-0904">Protein phosphatase</keyword>
<keyword id="KW-1185">Reference proteome</keyword>
<organism>
    <name type="scientific">Oryza sativa subsp. japonica</name>
    <name type="common">Rice</name>
    <dbReference type="NCBI Taxonomy" id="39947"/>
    <lineage>
        <taxon>Eukaryota</taxon>
        <taxon>Viridiplantae</taxon>
        <taxon>Streptophyta</taxon>
        <taxon>Embryophyta</taxon>
        <taxon>Tracheophyta</taxon>
        <taxon>Spermatophyta</taxon>
        <taxon>Magnoliopsida</taxon>
        <taxon>Liliopsida</taxon>
        <taxon>Poales</taxon>
        <taxon>Poaceae</taxon>
        <taxon>BOP clade</taxon>
        <taxon>Oryzoideae</taxon>
        <taxon>Oryzeae</taxon>
        <taxon>Oryzinae</taxon>
        <taxon>Oryza</taxon>
        <taxon>Oryza sativa</taxon>
    </lineage>
</organism>
<name>P2C63_ORYSJ</name>
<reference key="1">
    <citation type="journal article" date="2005" name="Nature">
        <title>The map-based sequence of the rice genome.</title>
        <authorList>
            <consortium name="International rice genome sequencing project (IRGSP)"/>
        </authorList>
    </citation>
    <scope>NUCLEOTIDE SEQUENCE [LARGE SCALE GENOMIC DNA]</scope>
    <source>
        <strain>cv. Nipponbare</strain>
    </source>
</reference>
<reference key="2">
    <citation type="journal article" date="2013" name="Rice">
        <title>Improvement of the Oryza sativa Nipponbare reference genome using next generation sequence and optical map data.</title>
        <authorList>
            <person name="Kawahara Y."/>
            <person name="de la Bastide M."/>
            <person name="Hamilton J.P."/>
            <person name="Kanamori H."/>
            <person name="McCombie W.R."/>
            <person name="Ouyang S."/>
            <person name="Schwartz D.C."/>
            <person name="Tanaka T."/>
            <person name="Wu J."/>
            <person name="Zhou S."/>
            <person name="Childs K.L."/>
            <person name="Davidson R.M."/>
            <person name="Lin H."/>
            <person name="Quesada-Ocampo L."/>
            <person name="Vaillancourt B."/>
            <person name="Sakai H."/>
            <person name="Lee S.S."/>
            <person name="Kim J."/>
            <person name="Numa H."/>
            <person name="Itoh T."/>
            <person name="Buell C.R."/>
            <person name="Matsumoto T."/>
        </authorList>
    </citation>
    <scope>GENOME REANNOTATION</scope>
    <source>
        <strain>cv. Nipponbare</strain>
    </source>
</reference>
<reference key="3">
    <citation type="journal article" date="2008" name="BMC Genomics">
        <title>Genome-wide and expression analysis of protein phosphatase 2C in rice and Arabidopsis.</title>
        <authorList>
            <person name="Xue T."/>
            <person name="Wang D."/>
            <person name="Zhang S."/>
            <person name="Ehlting J."/>
            <person name="Ni F."/>
            <person name="Jacab S."/>
            <person name="Zheng C."/>
            <person name="Zhong Y."/>
        </authorList>
    </citation>
    <scope>GENE FAMILY</scope>
    <scope>NOMENCLATURE</scope>
</reference>
<proteinExistence type="uncertain"/>
<evidence type="ECO:0000255" key="1">
    <source>
        <dbReference type="PROSITE-ProRule" id="PRU01082"/>
    </source>
</evidence>
<evidence type="ECO:0000256" key="2">
    <source>
        <dbReference type="SAM" id="MobiDB-lite"/>
    </source>
</evidence>
<evidence type="ECO:0000305" key="3"/>